<dbReference type="EC" id="4.1.1.98" evidence="1"/>
<dbReference type="EMBL" id="CP000514">
    <property type="protein sequence ID" value="ABM17583.1"/>
    <property type="molecule type" value="Genomic_DNA"/>
</dbReference>
<dbReference type="RefSeq" id="WP_011784027.1">
    <property type="nucleotide sequence ID" value="NC_008740.1"/>
</dbReference>
<dbReference type="SMR" id="A1TXW4"/>
<dbReference type="STRING" id="351348.Maqu_0482"/>
<dbReference type="KEGG" id="maq:Maqu_0482"/>
<dbReference type="eggNOG" id="COG0043">
    <property type="taxonomic scope" value="Bacteria"/>
</dbReference>
<dbReference type="HOGENOM" id="CLU_023348_4_1_6"/>
<dbReference type="OrthoDB" id="9809841at2"/>
<dbReference type="UniPathway" id="UPA00232"/>
<dbReference type="Proteomes" id="UP000000998">
    <property type="component" value="Chromosome"/>
</dbReference>
<dbReference type="GO" id="GO:0005829">
    <property type="term" value="C:cytosol"/>
    <property type="evidence" value="ECO:0007669"/>
    <property type="project" value="TreeGrafter"/>
</dbReference>
<dbReference type="GO" id="GO:0005886">
    <property type="term" value="C:plasma membrane"/>
    <property type="evidence" value="ECO:0007669"/>
    <property type="project" value="UniProtKB-SubCell"/>
</dbReference>
<dbReference type="GO" id="GO:0008694">
    <property type="term" value="F:3-octaprenyl-4-hydroxybenzoate carboxy-lyase activity"/>
    <property type="evidence" value="ECO:0007669"/>
    <property type="project" value="UniProtKB-UniRule"/>
</dbReference>
<dbReference type="GO" id="GO:0046872">
    <property type="term" value="F:metal ion binding"/>
    <property type="evidence" value="ECO:0007669"/>
    <property type="project" value="UniProtKB-KW"/>
</dbReference>
<dbReference type="GO" id="GO:0006744">
    <property type="term" value="P:ubiquinone biosynthetic process"/>
    <property type="evidence" value="ECO:0007669"/>
    <property type="project" value="UniProtKB-UniRule"/>
</dbReference>
<dbReference type="FunFam" id="3.40.1670.10:FF:000001">
    <property type="entry name" value="3-octaprenyl-4-hydroxybenzoate carboxy-lyase"/>
    <property type="match status" value="1"/>
</dbReference>
<dbReference type="Gene3D" id="1.20.5.570">
    <property type="entry name" value="Single helix bin"/>
    <property type="match status" value="1"/>
</dbReference>
<dbReference type="Gene3D" id="3.40.1670.10">
    <property type="entry name" value="UbiD C-terminal domain-like"/>
    <property type="match status" value="1"/>
</dbReference>
<dbReference type="HAMAP" id="MF_01636">
    <property type="entry name" value="UbiD"/>
    <property type="match status" value="1"/>
</dbReference>
<dbReference type="InterPro" id="IPR002830">
    <property type="entry name" value="UbiD"/>
</dbReference>
<dbReference type="InterPro" id="IPR049381">
    <property type="entry name" value="UbiD-like_C"/>
</dbReference>
<dbReference type="InterPro" id="IPR049383">
    <property type="entry name" value="UbiD-like_N"/>
</dbReference>
<dbReference type="InterPro" id="IPR023677">
    <property type="entry name" value="UbiD_bacteria"/>
</dbReference>
<dbReference type="InterPro" id="IPR048304">
    <property type="entry name" value="UbiD_Rift_dom"/>
</dbReference>
<dbReference type="NCBIfam" id="NF008175">
    <property type="entry name" value="PRK10922.1"/>
    <property type="match status" value="1"/>
</dbReference>
<dbReference type="NCBIfam" id="TIGR00148">
    <property type="entry name" value="UbiD family decarboxylase"/>
    <property type="match status" value="1"/>
</dbReference>
<dbReference type="PANTHER" id="PTHR30108">
    <property type="entry name" value="3-OCTAPRENYL-4-HYDROXYBENZOATE CARBOXY-LYASE-RELATED"/>
    <property type="match status" value="1"/>
</dbReference>
<dbReference type="PANTHER" id="PTHR30108:SF17">
    <property type="entry name" value="FERULIC ACID DECARBOXYLASE 1"/>
    <property type="match status" value="1"/>
</dbReference>
<dbReference type="Pfam" id="PF01977">
    <property type="entry name" value="UbiD"/>
    <property type="match status" value="1"/>
</dbReference>
<dbReference type="Pfam" id="PF20696">
    <property type="entry name" value="UbiD_C"/>
    <property type="match status" value="1"/>
</dbReference>
<dbReference type="Pfam" id="PF20695">
    <property type="entry name" value="UbiD_N"/>
    <property type="match status" value="1"/>
</dbReference>
<dbReference type="SUPFAM" id="SSF50475">
    <property type="entry name" value="FMN-binding split barrel"/>
    <property type="match status" value="1"/>
</dbReference>
<dbReference type="SUPFAM" id="SSF143968">
    <property type="entry name" value="UbiD C-terminal domain-like"/>
    <property type="match status" value="1"/>
</dbReference>
<name>UBID_MARN8</name>
<feature type="chain" id="PRO_1000069850" description="3-octaprenyl-4-hydroxybenzoate carboxy-lyase">
    <location>
        <begin position="1"/>
        <end position="495"/>
    </location>
</feature>
<feature type="active site" description="Proton donor" evidence="1">
    <location>
        <position position="287"/>
    </location>
</feature>
<feature type="binding site" evidence="1">
    <location>
        <position position="172"/>
    </location>
    <ligand>
        <name>Mn(2+)</name>
        <dbReference type="ChEBI" id="CHEBI:29035"/>
    </ligand>
</feature>
<feature type="binding site" evidence="1">
    <location>
        <begin position="175"/>
        <end position="177"/>
    </location>
    <ligand>
        <name>prenylated FMN</name>
        <dbReference type="ChEBI" id="CHEBI:87746"/>
    </ligand>
</feature>
<feature type="binding site" evidence="1">
    <location>
        <begin position="189"/>
        <end position="191"/>
    </location>
    <ligand>
        <name>prenylated FMN</name>
        <dbReference type="ChEBI" id="CHEBI:87746"/>
    </ligand>
</feature>
<feature type="binding site" evidence="1">
    <location>
        <begin position="194"/>
        <end position="195"/>
    </location>
    <ligand>
        <name>prenylated FMN</name>
        <dbReference type="ChEBI" id="CHEBI:87746"/>
    </ligand>
</feature>
<feature type="binding site" evidence="1">
    <location>
        <position position="238"/>
    </location>
    <ligand>
        <name>Mn(2+)</name>
        <dbReference type="ChEBI" id="CHEBI:29035"/>
    </ligand>
</feature>
<protein>
    <recommendedName>
        <fullName evidence="1">3-octaprenyl-4-hydroxybenzoate carboxy-lyase</fullName>
        <ecNumber evidence="1">4.1.1.98</ecNumber>
    </recommendedName>
    <alternativeName>
        <fullName evidence="1">Polyprenyl p-hydroxybenzoate decarboxylase</fullName>
    </alternativeName>
</protein>
<proteinExistence type="inferred from homology"/>
<accession>A1TXW4</accession>
<comment type="function">
    <text evidence="1">Catalyzes the decarboxylation of 3-octaprenyl-4-hydroxy benzoate to 2-octaprenylphenol, an intermediate step in ubiquinone biosynthesis.</text>
</comment>
<comment type="catalytic activity">
    <reaction evidence="1">
        <text>a 4-hydroxy-3-(all-trans-polyprenyl)benzoate + H(+) = a 2-(all-trans-polyprenyl)phenol + CO2</text>
        <dbReference type="Rhea" id="RHEA:41680"/>
        <dbReference type="Rhea" id="RHEA-COMP:9514"/>
        <dbReference type="Rhea" id="RHEA-COMP:9516"/>
        <dbReference type="ChEBI" id="CHEBI:1269"/>
        <dbReference type="ChEBI" id="CHEBI:15378"/>
        <dbReference type="ChEBI" id="CHEBI:16526"/>
        <dbReference type="ChEBI" id="CHEBI:78396"/>
        <dbReference type="EC" id="4.1.1.98"/>
    </reaction>
</comment>
<comment type="cofactor">
    <cofactor evidence="1">
        <name>prenylated FMN</name>
        <dbReference type="ChEBI" id="CHEBI:87746"/>
    </cofactor>
    <text evidence="1">Binds 1 prenylated FMN per subunit.</text>
</comment>
<comment type="cofactor">
    <cofactor evidence="1">
        <name>Mn(2+)</name>
        <dbReference type="ChEBI" id="CHEBI:29035"/>
    </cofactor>
</comment>
<comment type="pathway">
    <text evidence="1">Cofactor biosynthesis; ubiquinone biosynthesis.</text>
</comment>
<comment type="subunit">
    <text evidence="1">Homohexamer.</text>
</comment>
<comment type="subcellular location">
    <subcellularLocation>
        <location evidence="1">Cell membrane</location>
        <topology evidence="1">Peripheral membrane protein</topology>
    </subcellularLocation>
</comment>
<comment type="similarity">
    <text evidence="1">Belongs to the UbiD family.</text>
</comment>
<reference key="1">
    <citation type="journal article" date="2011" name="Appl. Environ. Microbiol.">
        <title>Genomic potential of Marinobacter aquaeolei, a biogeochemical 'opportunitroph'.</title>
        <authorList>
            <person name="Singer E."/>
            <person name="Webb E.A."/>
            <person name="Nelson W.C."/>
            <person name="Heidelberg J.F."/>
            <person name="Ivanova N."/>
            <person name="Pati A."/>
            <person name="Edwards K.J."/>
        </authorList>
    </citation>
    <scope>NUCLEOTIDE SEQUENCE [LARGE SCALE GENOMIC DNA]</scope>
    <source>
        <strain>ATCC 700491 / DSM 11845 / VT8</strain>
    </source>
</reference>
<keyword id="KW-1003">Cell membrane</keyword>
<keyword id="KW-0210">Decarboxylase</keyword>
<keyword id="KW-0285">Flavoprotein</keyword>
<keyword id="KW-0288">FMN</keyword>
<keyword id="KW-0456">Lyase</keyword>
<keyword id="KW-0464">Manganese</keyword>
<keyword id="KW-0472">Membrane</keyword>
<keyword id="KW-0479">Metal-binding</keyword>
<keyword id="KW-0831">Ubiquinone biosynthesis</keyword>
<sequence>MKYNDLRDFVSQLEKLGELKRITAEVDPHLEMTEICDRTLRAGGPALLFENPKGYDMPVLANLFGTPKRVALGMGQDDVAALREIGKLLAFLKEPDPPKGFKDAIEKLPLFRQVMRMSPKVLRSAPCQDVVIEKDKVDLYQIPVQHCWPGDAGPLVTWPLVITRGPNKERQNLGIYRQQVIGRNRLIMRWLSHRGGALDYQEFRKANPDKPYPVAVALGADPATILGAVTPVPDTLSEYAFAGLLRGSRTELVNAGLSDLQVPASAEIVLEGFIYPDDMAPEGPFGDHTGYYNEVDQFPVFTVERITHRRDPIYHSTYTGRPPDEPAILGVALNEVFIPILQKQFPEIVDFYLPPEGCSYRLAVVTMKKQYPGHAKRVMMGVWSFLRQFMYTKFVIVTDDDVNARNWEDVIWAITTRMDPARDTTLVENTPIDYLDFASPVSGLGSKMGMDATNKWPGETDREWGTAIAMTDEVKQRVDDIWDSLGIEIPGARPD</sequence>
<gene>
    <name evidence="1" type="primary">ubiD</name>
    <name type="ordered locus">Maqu_0482</name>
</gene>
<organism>
    <name type="scientific">Marinobacter nauticus (strain ATCC 700491 / DSM 11845 / VT8)</name>
    <name type="common">Marinobacter aquaeolei</name>
    <dbReference type="NCBI Taxonomy" id="351348"/>
    <lineage>
        <taxon>Bacteria</taxon>
        <taxon>Pseudomonadati</taxon>
        <taxon>Pseudomonadota</taxon>
        <taxon>Gammaproteobacteria</taxon>
        <taxon>Pseudomonadales</taxon>
        <taxon>Marinobacteraceae</taxon>
        <taxon>Marinobacter</taxon>
    </lineage>
</organism>
<evidence type="ECO:0000255" key="1">
    <source>
        <dbReference type="HAMAP-Rule" id="MF_01636"/>
    </source>
</evidence>